<keyword id="KW-0843">Virulence</keyword>
<reference key="1">
    <citation type="journal article" date="2019" name="MSphere">
        <title>Identification of a polyketide synthase gene responsible for ascochitine biosynthesis in Ascochyta fabae and its abrogation in sister taxa.</title>
        <authorList>
            <person name="Kim W."/>
            <person name="Lichtenzveig J."/>
            <person name="Syme R.A."/>
            <person name="Williams A.H."/>
            <person name="Peever T.L."/>
            <person name="Chen W."/>
        </authorList>
    </citation>
    <scope>NUCLEOTIDE SEQUENCE [GENOMIC DNA]</scope>
    <scope>FUNCTION</scope>
    <source>
        <strain>AF247/15</strain>
    </source>
</reference>
<gene>
    <name evidence="3" type="ORF">orf10</name>
</gene>
<sequence length="128" mass="13820">MVLHGQISGIEIPATDVERAAKFYSDTFGWKFQAPANGTIPASKMQTFTAPGDIFPDEGVVSKVEEIPKSGAKFYINVDDLKATIEAVTKNGGKQLSDVISLGPHVPPFQFFHDTEGNTHAICTRPGK</sequence>
<comment type="function">
    <text evidence="2 4">Glyoxylase-like domain-containing protein; part of the gene cluster that mediates the biosynthesis of the selective antifungal agent ascochitine, an o-quinone methide that plays a possible protective role against other microbial competitors in nature and is considered to be important for pathogenicity of legume-associated Didymella species (PubMed:31554725). The pathway probably begins with the synthesis of a keto-aldehyde intermediate by the ascochitine non-reducing polyketide synthase pksAC from successive condensations of 4 malonyl-CoA units, presumably with a simple acetyl-CoA starter unit (Probable). Release of the keto-aldehyde intermediate is consistent with the presence of the C-terminal reductive release domain (Probable). The HR-PKS (orf7) probably makes a diketide starter unit which is passed to the non-reducing polyketide synthase pksAC for further extension, producing ascochital and ascochitine (Probable). The aldehyde dehydrogenase (orf1), the 2-oxoglutarate-dependent dioxygenase (orf3) and the dehydrogenase (orf9) are probably involved in subsequent oxidations of methyl groups to the carboxylic acid of the heterocyclic ring (Probable). The ascochitine gene cluster also includes a gene encoding a short peptide with a cupin domain (orf2) that is often found in secondary metabolite gene clusters and which function has still to be determined (Probable).</text>
</comment>
<comment type="pathway">
    <text evidence="4">Mycotoxin biosynthesis.</text>
</comment>
<accession>A0A5C1RFE1</accession>
<dbReference type="EMBL" id="MN052631">
    <property type="protein sequence ID" value="QEN17978.1"/>
    <property type="molecule type" value="Genomic_DNA"/>
</dbReference>
<dbReference type="SMR" id="A0A5C1RFE1"/>
<dbReference type="Gene3D" id="3.10.180.10">
    <property type="entry name" value="2,3-Dihydroxybiphenyl 1,2-Dioxygenase, domain 1"/>
    <property type="match status" value="1"/>
</dbReference>
<dbReference type="InterPro" id="IPR052164">
    <property type="entry name" value="Anthracycline_SecMetBiosynth"/>
</dbReference>
<dbReference type="InterPro" id="IPR029068">
    <property type="entry name" value="Glyas_Bleomycin-R_OHBP_Dase"/>
</dbReference>
<dbReference type="InterPro" id="IPR053863">
    <property type="entry name" value="Glyoxy/Ble-like_N"/>
</dbReference>
<dbReference type="InterPro" id="IPR037523">
    <property type="entry name" value="VOC"/>
</dbReference>
<dbReference type="PANTHER" id="PTHR33993">
    <property type="entry name" value="GLYOXALASE-RELATED"/>
    <property type="match status" value="1"/>
</dbReference>
<dbReference type="Pfam" id="PF22677">
    <property type="entry name" value="Ble-like_N"/>
    <property type="match status" value="1"/>
</dbReference>
<dbReference type="SUPFAM" id="SSF54593">
    <property type="entry name" value="Glyoxalase/Bleomycin resistance protein/Dihydroxybiphenyl dioxygenase"/>
    <property type="match status" value="1"/>
</dbReference>
<dbReference type="PROSITE" id="PS51819">
    <property type="entry name" value="VOC"/>
    <property type="match status" value="1"/>
</dbReference>
<evidence type="ECO:0000255" key="1">
    <source>
        <dbReference type="PROSITE-ProRule" id="PRU01163"/>
    </source>
</evidence>
<evidence type="ECO:0000269" key="2">
    <source>
    </source>
</evidence>
<evidence type="ECO:0000303" key="3">
    <source>
    </source>
</evidence>
<evidence type="ECO:0000305" key="4">
    <source>
    </source>
</evidence>
<feature type="chain" id="PRO_0000448995" description="Glyoxylase-like domain-containing protein">
    <location>
        <begin position="1"/>
        <end position="128"/>
    </location>
</feature>
<feature type="domain" description="VOC" evidence="1">
    <location>
        <begin position="6"/>
        <end position="125"/>
    </location>
</feature>
<protein>
    <recommendedName>
        <fullName evidence="3">Glyoxylase-like domain-containing protein</fullName>
    </recommendedName>
    <alternativeName>
        <fullName evidence="3">Ascochitine biosynthesis cluster protein 10</fullName>
    </alternativeName>
</protein>
<organism>
    <name type="scientific">Didymella fabae</name>
    <name type="common">Leaf and pod spot disease fungus</name>
    <name type="synonym">Ascochyta fabae</name>
    <dbReference type="NCBI Taxonomy" id="372025"/>
    <lineage>
        <taxon>Eukaryota</taxon>
        <taxon>Fungi</taxon>
        <taxon>Dikarya</taxon>
        <taxon>Ascomycota</taxon>
        <taxon>Pezizomycotina</taxon>
        <taxon>Dothideomycetes</taxon>
        <taxon>Pleosporomycetidae</taxon>
        <taxon>Pleosporales</taxon>
        <taxon>Pleosporineae</taxon>
        <taxon>Didymellaceae</taxon>
        <taxon>Ascochyta</taxon>
    </lineage>
</organism>
<name>ASC10_DIDFA</name>
<proteinExistence type="predicted"/>